<protein>
    <recommendedName>
        <fullName evidence="1">Adenylate kinase</fullName>
        <shortName evidence="1">AK</shortName>
        <ecNumber evidence="1">2.7.4.3</ecNumber>
    </recommendedName>
    <alternativeName>
        <fullName evidence="1">ATP-AMP transphosphorylase</fullName>
    </alternativeName>
    <alternativeName>
        <fullName evidence="1">ATP:AMP phosphotransferase</fullName>
    </alternativeName>
    <alternativeName>
        <fullName evidence="1">Adenylate monophosphate kinase</fullName>
    </alternativeName>
</protein>
<name>KAD_LISMF</name>
<gene>
    <name evidence="1" type="primary">adk</name>
    <name type="ordered locus">LMOf2365_2584</name>
</gene>
<comment type="function">
    <text evidence="1">Catalyzes the reversible transfer of the terminal phosphate group between ATP and AMP. Plays an important role in cellular energy homeostasis and in adenine nucleotide metabolism.</text>
</comment>
<comment type="catalytic activity">
    <reaction evidence="1">
        <text>AMP + ATP = 2 ADP</text>
        <dbReference type="Rhea" id="RHEA:12973"/>
        <dbReference type="ChEBI" id="CHEBI:30616"/>
        <dbReference type="ChEBI" id="CHEBI:456215"/>
        <dbReference type="ChEBI" id="CHEBI:456216"/>
        <dbReference type="EC" id="2.7.4.3"/>
    </reaction>
</comment>
<comment type="pathway">
    <text evidence="1">Purine metabolism; AMP biosynthesis via salvage pathway; AMP from ADP: step 1/1.</text>
</comment>
<comment type="subunit">
    <text evidence="1">Monomer.</text>
</comment>
<comment type="subcellular location">
    <subcellularLocation>
        <location evidence="1">Cytoplasm</location>
    </subcellularLocation>
</comment>
<comment type="domain">
    <text evidence="1">Consists of three domains, a large central CORE domain and two small peripheral domains, NMPbind and LID, which undergo movements during catalysis. The LID domain closes over the site of phosphoryl transfer upon ATP binding. Assembling and dissambling the active center during each catalytic cycle provides an effective means to prevent ATP hydrolysis. Some bacteria have evolved a zinc-coordinating structure that stabilizes the LID domain.</text>
</comment>
<comment type="similarity">
    <text evidence="1">Belongs to the adenylate kinase family.</text>
</comment>
<evidence type="ECO:0000255" key="1">
    <source>
        <dbReference type="HAMAP-Rule" id="MF_00235"/>
    </source>
</evidence>
<keyword id="KW-0067">ATP-binding</keyword>
<keyword id="KW-0963">Cytoplasm</keyword>
<keyword id="KW-0418">Kinase</keyword>
<keyword id="KW-0479">Metal-binding</keyword>
<keyword id="KW-0545">Nucleotide biosynthesis</keyword>
<keyword id="KW-0547">Nucleotide-binding</keyword>
<keyword id="KW-0808">Transferase</keyword>
<keyword id="KW-0862">Zinc</keyword>
<dbReference type="EC" id="2.7.4.3" evidence="1"/>
<dbReference type="EMBL" id="AE017262">
    <property type="protein sequence ID" value="AAT05349.1"/>
    <property type="molecule type" value="Genomic_DNA"/>
</dbReference>
<dbReference type="RefSeq" id="WP_003740304.1">
    <property type="nucleotide sequence ID" value="NC_002973.6"/>
</dbReference>
<dbReference type="SMR" id="Q71WG7"/>
<dbReference type="KEGG" id="lmf:LMOf2365_2584"/>
<dbReference type="HOGENOM" id="CLU_032354_1_2_9"/>
<dbReference type="UniPathway" id="UPA00588">
    <property type="reaction ID" value="UER00649"/>
</dbReference>
<dbReference type="GO" id="GO:0005737">
    <property type="term" value="C:cytoplasm"/>
    <property type="evidence" value="ECO:0007669"/>
    <property type="project" value="UniProtKB-SubCell"/>
</dbReference>
<dbReference type="GO" id="GO:0004017">
    <property type="term" value="F:adenylate kinase activity"/>
    <property type="evidence" value="ECO:0007669"/>
    <property type="project" value="UniProtKB-UniRule"/>
</dbReference>
<dbReference type="GO" id="GO:0005524">
    <property type="term" value="F:ATP binding"/>
    <property type="evidence" value="ECO:0007669"/>
    <property type="project" value="UniProtKB-UniRule"/>
</dbReference>
<dbReference type="GO" id="GO:0008270">
    <property type="term" value="F:zinc ion binding"/>
    <property type="evidence" value="ECO:0007669"/>
    <property type="project" value="UniProtKB-UniRule"/>
</dbReference>
<dbReference type="GO" id="GO:0044209">
    <property type="term" value="P:AMP salvage"/>
    <property type="evidence" value="ECO:0007669"/>
    <property type="project" value="UniProtKB-UniRule"/>
</dbReference>
<dbReference type="CDD" id="cd01428">
    <property type="entry name" value="ADK"/>
    <property type="match status" value="1"/>
</dbReference>
<dbReference type="FunFam" id="3.40.50.300:FF:000106">
    <property type="entry name" value="Adenylate kinase mitochondrial"/>
    <property type="match status" value="1"/>
</dbReference>
<dbReference type="Gene3D" id="3.40.50.300">
    <property type="entry name" value="P-loop containing nucleotide triphosphate hydrolases"/>
    <property type="match status" value="1"/>
</dbReference>
<dbReference type="HAMAP" id="MF_00235">
    <property type="entry name" value="Adenylate_kinase_Adk"/>
    <property type="match status" value="1"/>
</dbReference>
<dbReference type="InterPro" id="IPR006259">
    <property type="entry name" value="Adenyl_kin_sub"/>
</dbReference>
<dbReference type="InterPro" id="IPR000850">
    <property type="entry name" value="Adenylat/UMP-CMP_kin"/>
</dbReference>
<dbReference type="InterPro" id="IPR033690">
    <property type="entry name" value="Adenylat_kinase_CS"/>
</dbReference>
<dbReference type="InterPro" id="IPR007862">
    <property type="entry name" value="Adenylate_kinase_lid-dom"/>
</dbReference>
<dbReference type="InterPro" id="IPR027417">
    <property type="entry name" value="P-loop_NTPase"/>
</dbReference>
<dbReference type="NCBIfam" id="TIGR01351">
    <property type="entry name" value="adk"/>
    <property type="match status" value="1"/>
</dbReference>
<dbReference type="NCBIfam" id="NF001380">
    <property type="entry name" value="PRK00279.1-2"/>
    <property type="match status" value="1"/>
</dbReference>
<dbReference type="NCBIfam" id="NF001381">
    <property type="entry name" value="PRK00279.1-3"/>
    <property type="match status" value="1"/>
</dbReference>
<dbReference type="NCBIfam" id="NF011100">
    <property type="entry name" value="PRK14527.1"/>
    <property type="match status" value="1"/>
</dbReference>
<dbReference type="PANTHER" id="PTHR23359">
    <property type="entry name" value="NUCLEOTIDE KINASE"/>
    <property type="match status" value="1"/>
</dbReference>
<dbReference type="Pfam" id="PF00406">
    <property type="entry name" value="ADK"/>
    <property type="match status" value="1"/>
</dbReference>
<dbReference type="Pfam" id="PF05191">
    <property type="entry name" value="ADK_lid"/>
    <property type="match status" value="1"/>
</dbReference>
<dbReference type="PRINTS" id="PR00094">
    <property type="entry name" value="ADENYLTKNASE"/>
</dbReference>
<dbReference type="SUPFAM" id="SSF52540">
    <property type="entry name" value="P-loop containing nucleoside triphosphate hydrolases"/>
    <property type="match status" value="1"/>
</dbReference>
<dbReference type="PROSITE" id="PS00113">
    <property type="entry name" value="ADENYLATE_KINASE"/>
    <property type="match status" value="1"/>
</dbReference>
<organism>
    <name type="scientific">Listeria monocytogenes serotype 4b (strain F2365)</name>
    <dbReference type="NCBI Taxonomy" id="265669"/>
    <lineage>
        <taxon>Bacteria</taxon>
        <taxon>Bacillati</taxon>
        <taxon>Bacillota</taxon>
        <taxon>Bacilli</taxon>
        <taxon>Bacillales</taxon>
        <taxon>Listeriaceae</taxon>
        <taxon>Listeria</taxon>
    </lineage>
</organism>
<accession>Q71WG7</accession>
<reference key="1">
    <citation type="journal article" date="2004" name="Nucleic Acids Res.">
        <title>Whole genome comparisons of serotype 4b and 1/2a strains of the food-borne pathogen Listeria monocytogenes reveal new insights into the core genome components of this species.</title>
        <authorList>
            <person name="Nelson K.E."/>
            <person name="Fouts D.E."/>
            <person name="Mongodin E.F."/>
            <person name="Ravel J."/>
            <person name="DeBoy R.T."/>
            <person name="Kolonay J.F."/>
            <person name="Rasko D.A."/>
            <person name="Angiuoli S.V."/>
            <person name="Gill S.R."/>
            <person name="Paulsen I.T."/>
            <person name="Peterson J.D."/>
            <person name="White O."/>
            <person name="Nelson W.C."/>
            <person name="Nierman W.C."/>
            <person name="Beanan M.J."/>
            <person name="Brinkac L.M."/>
            <person name="Daugherty S.C."/>
            <person name="Dodson R.J."/>
            <person name="Durkin A.S."/>
            <person name="Madupu R."/>
            <person name="Haft D.H."/>
            <person name="Selengut J."/>
            <person name="Van Aken S.E."/>
            <person name="Khouri H.M."/>
            <person name="Fedorova N."/>
            <person name="Forberger H.A."/>
            <person name="Tran B."/>
            <person name="Kathariou S."/>
            <person name="Wonderling L.D."/>
            <person name="Uhlich G.A."/>
            <person name="Bayles D.O."/>
            <person name="Luchansky J.B."/>
            <person name="Fraser C.M."/>
        </authorList>
    </citation>
    <scope>NUCLEOTIDE SEQUENCE [LARGE SCALE GENOMIC DNA]</scope>
    <source>
        <strain>F2365</strain>
    </source>
</reference>
<sequence length="215" mass="24233">MKLVLMGLPGAGKGTQAEQIVEKYNIPHISTGDMFRAAMKNNTELGKKAKSFMDNGDLVPDEVTNGIVRERLAEDDAKNGFLLDGFPRTVEQAEELENILNDLGTELDAVINIEVDKDVLMKRLTGRWICRTCGKTYHEIYNPPKVPGKCDLDGGELYQRDDDKKETVEKRLNVNMKQTKPLLDFYSEKGKLHNINGEQDIKDVFVDVEKILASF</sequence>
<proteinExistence type="inferred from homology"/>
<feature type="chain" id="PRO_0000158788" description="Adenylate kinase">
    <location>
        <begin position="1"/>
        <end position="215"/>
    </location>
</feature>
<feature type="region of interest" description="NMP" evidence="1">
    <location>
        <begin position="30"/>
        <end position="59"/>
    </location>
</feature>
<feature type="region of interest" description="LID" evidence="1">
    <location>
        <begin position="126"/>
        <end position="163"/>
    </location>
</feature>
<feature type="binding site" evidence="1">
    <location>
        <begin position="10"/>
        <end position="15"/>
    </location>
    <ligand>
        <name>ATP</name>
        <dbReference type="ChEBI" id="CHEBI:30616"/>
    </ligand>
</feature>
<feature type="binding site" evidence="1">
    <location>
        <position position="31"/>
    </location>
    <ligand>
        <name>AMP</name>
        <dbReference type="ChEBI" id="CHEBI:456215"/>
    </ligand>
</feature>
<feature type="binding site" evidence="1">
    <location>
        <position position="36"/>
    </location>
    <ligand>
        <name>AMP</name>
        <dbReference type="ChEBI" id="CHEBI:456215"/>
    </ligand>
</feature>
<feature type="binding site" evidence="1">
    <location>
        <begin position="57"/>
        <end position="59"/>
    </location>
    <ligand>
        <name>AMP</name>
        <dbReference type="ChEBI" id="CHEBI:456215"/>
    </ligand>
</feature>
<feature type="binding site" evidence="1">
    <location>
        <begin position="85"/>
        <end position="88"/>
    </location>
    <ligand>
        <name>AMP</name>
        <dbReference type="ChEBI" id="CHEBI:456215"/>
    </ligand>
</feature>
<feature type="binding site" evidence="1">
    <location>
        <position position="92"/>
    </location>
    <ligand>
        <name>AMP</name>
        <dbReference type="ChEBI" id="CHEBI:456215"/>
    </ligand>
</feature>
<feature type="binding site" evidence="1">
    <location>
        <position position="127"/>
    </location>
    <ligand>
        <name>ATP</name>
        <dbReference type="ChEBI" id="CHEBI:30616"/>
    </ligand>
</feature>
<feature type="binding site" evidence="1">
    <location>
        <position position="130"/>
    </location>
    <ligand>
        <name>Zn(2+)</name>
        <dbReference type="ChEBI" id="CHEBI:29105"/>
        <note>structural</note>
    </ligand>
</feature>
<feature type="binding site" evidence="1">
    <location>
        <position position="133"/>
    </location>
    <ligand>
        <name>Zn(2+)</name>
        <dbReference type="ChEBI" id="CHEBI:29105"/>
        <note>structural</note>
    </ligand>
</feature>
<feature type="binding site" evidence="1">
    <location>
        <begin position="136"/>
        <end position="137"/>
    </location>
    <ligand>
        <name>ATP</name>
        <dbReference type="ChEBI" id="CHEBI:30616"/>
    </ligand>
</feature>
<feature type="binding site" evidence="1">
    <location>
        <position position="150"/>
    </location>
    <ligand>
        <name>Zn(2+)</name>
        <dbReference type="ChEBI" id="CHEBI:29105"/>
        <note>structural</note>
    </ligand>
</feature>
<feature type="binding site" evidence="1">
    <location>
        <position position="153"/>
    </location>
    <ligand>
        <name>Zn(2+)</name>
        <dbReference type="ChEBI" id="CHEBI:29105"/>
        <note>structural</note>
    </ligand>
</feature>
<feature type="binding site" evidence="1">
    <location>
        <position position="160"/>
    </location>
    <ligand>
        <name>AMP</name>
        <dbReference type="ChEBI" id="CHEBI:456215"/>
    </ligand>
</feature>
<feature type="binding site" evidence="1">
    <location>
        <position position="171"/>
    </location>
    <ligand>
        <name>AMP</name>
        <dbReference type="ChEBI" id="CHEBI:456215"/>
    </ligand>
</feature>
<feature type="binding site" evidence="1">
    <location>
        <position position="199"/>
    </location>
    <ligand>
        <name>ATP</name>
        <dbReference type="ChEBI" id="CHEBI:30616"/>
    </ligand>
</feature>